<accession>Q83FD6</accession>
<gene>
    <name evidence="1" type="primary">recF</name>
    <name type="ordered locus">CBU_0003</name>
</gene>
<keyword id="KW-0067">ATP-binding</keyword>
<keyword id="KW-0963">Cytoplasm</keyword>
<keyword id="KW-0227">DNA damage</keyword>
<keyword id="KW-0234">DNA repair</keyword>
<keyword id="KW-0235">DNA replication</keyword>
<keyword id="KW-0238">DNA-binding</keyword>
<keyword id="KW-0547">Nucleotide-binding</keyword>
<keyword id="KW-1185">Reference proteome</keyword>
<keyword id="KW-0742">SOS response</keyword>
<protein>
    <recommendedName>
        <fullName evidence="1">DNA replication and repair protein RecF</fullName>
    </recommendedName>
</protein>
<reference key="1">
    <citation type="journal article" date="2003" name="Proc. Natl. Acad. Sci. U.S.A.">
        <title>Complete genome sequence of the Q-fever pathogen, Coxiella burnetii.</title>
        <authorList>
            <person name="Seshadri R."/>
            <person name="Paulsen I.T."/>
            <person name="Eisen J.A."/>
            <person name="Read T.D."/>
            <person name="Nelson K.E."/>
            <person name="Nelson W.C."/>
            <person name="Ward N.L."/>
            <person name="Tettelin H."/>
            <person name="Davidsen T.M."/>
            <person name="Beanan M.J."/>
            <person name="DeBoy R.T."/>
            <person name="Daugherty S.C."/>
            <person name="Brinkac L.M."/>
            <person name="Madupu R."/>
            <person name="Dodson R.J."/>
            <person name="Khouri H.M."/>
            <person name="Lee K.H."/>
            <person name="Carty H.A."/>
            <person name="Scanlan D."/>
            <person name="Heinzen R.A."/>
            <person name="Thompson H.A."/>
            <person name="Samuel J.E."/>
            <person name="Fraser C.M."/>
            <person name="Heidelberg J.F."/>
        </authorList>
    </citation>
    <scope>NUCLEOTIDE SEQUENCE [LARGE SCALE GENOMIC DNA]</scope>
    <source>
        <strain>RSA 493 / Nine Mile phase I</strain>
    </source>
</reference>
<feature type="chain" id="PRO_0000196412" description="DNA replication and repair protein RecF">
    <location>
        <begin position="1"/>
        <end position="357"/>
    </location>
</feature>
<feature type="binding site" evidence="1">
    <location>
        <begin position="31"/>
        <end position="38"/>
    </location>
    <ligand>
        <name>ATP</name>
        <dbReference type="ChEBI" id="CHEBI:30616"/>
    </ligand>
</feature>
<sequence length="357" mass="41039">MPYIGSLKVNQFRNLADVDITPHSQFNFFFGQNGAGKTSILESIYYLSVGRSFRTHLPQRLIQDNTDRFLIFITLYNGTQFIPLGVERDCHGDRCLRINGETASSWSLAAKRLPLCSLSAMSHRFLLDGPRVRRQFLDWLMFHVEPSFFSIWQRLQRSLKQRNAALKAKLPLGEITHWDKMLVEDGERLHQLRQNVVTEFKPLFTQMLQQFLPAYPLIGHYFRGWSEKYSLMEQLQINLKQDLQRGYTQAGPQRADFRLTLGDLPAQDILSQGQQKLVTYALHFAQGLLLKEKTGISPIYLIDDLPAELDANKRDCVIDLVNCLESQVFISGIDPNEIRLPPHSTLFHVKHGKVAAL</sequence>
<comment type="function">
    <text evidence="1">The RecF protein is involved in DNA metabolism; it is required for DNA replication and normal SOS inducibility. RecF binds preferentially to single-stranded, linear DNA. It also seems to bind ATP.</text>
</comment>
<comment type="subcellular location">
    <subcellularLocation>
        <location evidence="1">Cytoplasm</location>
    </subcellularLocation>
</comment>
<comment type="similarity">
    <text evidence="1">Belongs to the RecF family.</text>
</comment>
<evidence type="ECO:0000255" key="1">
    <source>
        <dbReference type="HAMAP-Rule" id="MF_00365"/>
    </source>
</evidence>
<proteinExistence type="inferred from homology"/>
<organism>
    <name type="scientific">Coxiella burnetii (strain RSA 493 / Nine Mile phase I)</name>
    <dbReference type="NCBI Taxonomy" id="227377"/>
    <lineage>
        <taxon>Bacteria</taxon>
        <taxon>Pseudomonadati</taxon>
        <taxon>Pseudomonadota</taxon>
        <taxon>Gammaproteobacteria</taxon>
        <taxon>Legionellales</taxon>
        <taxon>Coxiellaceae</taxon>
        <taxon>Coxiella</taxon>
    </lineage>
</organism>
<dbReference type="EMBL" id="AE016828">
    <property type="protein sequence ID" value="AAO89573.2"/>
    <property type="molecule type" value="Genomic_DNA"/>
</dbReference>
<dbReference type="RefSeq" id="NP_819059.2">
    <property type="nucleotide sequence ID" value="NC_002971.4"/>
</dbReference>
<dbReference type="RefSeq" id="WP_010957316.1">
    <property type="nucleotide sequence ID" value="NC_002971.4"/>
</dbReference>
<dbReference type="SMR" id="Q83FD6"/>
<dbReference type="STRING" id="227377.CBU_0003"/>
<dbReference type="EnsemblBacteria" id="AAO89573">
    <property type="protein sequence ID" value="AAO89573"/>
    <property type="gene ID" value="CBU_0003"/>
</dbReference>
<dbReference type="GeneID" id="1207923"/>
<dbReference type="KEGG" id="cbu:CBU_0003"/>
<dbReference type="PATRIC" id="fig|227377.7.peg.4"/>
<dbReference type="eggNOG" id="COG1195">
    <property type="taxonomic scope" value="Bacteria"/>
</dbReference>
<dbReference type="HOGENOM" id="CLU_040267_0_0_6"/>
<dbReference type="OrthoDB" id="9803889at2"/>
<dbReference type="Proteomes" id="UP000002671">
    <property type="component" value="Chromosome"/>
</dbReference>
<dbReference type="GO" id="GO:0005737">
    <property type="term" value="C:cytoplasm"/>
    <property type="evidence" value="ECO:0007669"/>
    <property type="project" value="UniProtKB-SubCell"/>
</dbReference>
<dbReference type="GO" id="GO:0005524">
    <property type="term" value="F:ATP binding"/>
    <property type="evidence" value="ECO:0007669"/>
    <property type="project" value="UniProtKB-UniRule"/>
</dbReference>
<dbReference type="GO" id="GO:0003697">
    <property type="term" value="F:single-stranded DNA binding"/>
    <property type="evidence" value="ECO:0007669"/>
    <property type="project" value="UniProtKB-UniRule"/>
</dbReference>
<dbReference type="GO" id="GO:0006260">
    <property type="term" value="P:DNA replication"/>
    <property type="evidence" value="ECO:0007669"/>
    <property type="project" value="UniProtKB-UniRule"/>
</dbReference>
<dbReference type="GO" id="GO:0000731">
    <property type="term" value="P:DNA synthesis involved in DNA repair"/>
    <property type="evidence" value="ECO:0000318"/>
    <property type="project" value="GO_Central"/>
</dbReference>
<dbReference type="GO" id="GO:0006302">
    <property type="term" value="P:double-strand break repair"/>
    <property type="evidence" value="ECO:0000318"/>
    <property type="project" value="GO_Central"/>
</dbReference>
<dbReference type="GO" id="GO:0009432">
    <property type="term" value="P:SOS response"/>
    <property type="evidence" value="ECO:0007669"/>
    <property type="project" value="UniProtKB-UniRule"/>
</dbReference>
<dbReference type="Gene3D" id="3.40.50.300">
    <property type="entry name" value="P-loop containing nucleotide triphosphate hydrolases"/>
    <property type="match status" value="1"/>
</dbReference>
<dbReference type="Gene3D" id="1.20.1050.90">
    <property type="entry name" value="RecF/RecN/SMC, N-terminal domain"/>
    <property type="match status" value="1"/>
</dbReference>
<dbReference type="HAMAP" id="MF_00365">
    <property type="entry name" value="RecF"/>
    <property type="match status" value="1"/>
</dbReference>
<dbReference type="InterPro" id="IPR001238">
    <property type="entry name" value="DNA-binding_RecF"/>
</dbReference>
<dbReference type="InterPro" id="IPR018078">
    <property type="entry name" value="DNA-binding_RecF_CS"/>
</dbReference>
<dbReference type="InterPro" id="IPR027417">
    <property type="entry name" value="P-loop_NTPase"/>
</dbReference>
<dbReference type="InterPro" id="IPR003395">
    <property type="entry name" value="RecF/RecN/SMC_N"/>
</dbReference>
<dbReference type="InterPro" id="IPR042174">
    <property type="entry name" value="RecF_2"/>
</dbReference>
<dbReference type="NCBIfam" id="TIGR00611">
    <property type="entry name" value="recf"/>
    <property type="match status" value="1"/>
</dbReference>
<dbReference type="PANTHER" id="PTHR32182">
    <property type="entry name" value="DNA REPLICATION AND REPAIR PROTEIN RECF"/>
    <property type="match status" value="1"/>
</dbReference>
<dbReference type="PANTHER" id="PTHR32182:SF0">
    <property type="entry name" value="DNA REPLICATION AND REPAIR PROTEIN RECF"/>
    <property type="match status" value="1"/>
</dbReference>
<dbReference type="Pfam" id="PF02463">
    <property type="entry name" value="SMC_N"/>
    <property type="match status" value="1"/>
</dbReference>
<dbReference type="SUPFAM" id="SSF52540">
    <property type="entry name" value="P-loop containing nucleoside triphosphate hydrolases"/>
    <property type="match status" value="1"/>
</dbReference>
<dbReference type="PROSITE" id="PS00617">
    <property type="entry name" value="RECF_1"/>
    <property type="match status" value="1"/>
</dbReference>
<dbReference type="PROSITE" id="PS00618">
    <property type="entry name" value="RECF_2"/>
    <property type="match status" value="1"/>
</dbReference>
<name>RECF_COXBU</name>